<sequence length="267" mass="29815">MHEHSLFAPVPAAQHHDLLQQLAGVTAMQPNRIYERRLVFKPYRKPGYLKPRPGGSQDVQAPEVQRLNKMLNGGLYHVQVVGEVKLTDFGTHPSTVDATMGGTDFGNQHQNEYDISNQSWRIEFKDIPDAGTGSAVTSRLISTSRVPYGDIVPVMKAWGYDYVSEYVLEGDMFILDDTVILLHRILNFPAKHHLQGLPAFYLPPLQEMVPLDSTGGYLLQASITVQDSGNPDLMKATTQRLLGLKEHLKSAVRLESADRLSLDTRVK</sequence>
<accession>Q1E065</accession>
<accession>A0A0D6K9P4</accession>
<accession>J3KD37</accession>
<comment type="function">
    <text evidence="1">Component of the Mediator complex, a coactivator involved in the regulated transcription of nearly all RNA polymerase II-dependent genes. Mediator functions as a bridge to convey information from gene-specific regulatory proteins to the basal RNA polymerase II transcription machinery. Mediator is recruited to promoters by direct interactions with regulatory proteins and serves as a scaffold for the assembly of a functional preinitiation complex with RNA polymerase II and the general transcription factors (By similarity).</text>
</comment>
<comment type="subunit">
    <text evidence="1">Component of the Mediator complex.</text>
</comment>
<comment type="subcellular location">
    <subcellularLocation>
        <location evidence="1">Nucleus</location>
    </subcellularLocation>
</comment>
<comment type="similarity">
    <text evidence="2">Belongs to the Mediator complex subunit 18 family.</text>
</comment>
<gene>
    <name type="primary">SRB5</name>
    <name type="synonym">MED18</name>
    <name type="ORF">CIMG_04048</name>
</gene>
<reference key="1">
    <citation type="journal article" date="2009" name="Genome Res.">
        <title>Comparative genomic analyses of the human fungal pathogens Coccidioides and their relatives.</title>
        <authorList>
            <person name="Sharpton T.J."/>
            <person name="Stajich J.E."/>
            <person name="Rounsley S.D."/>
            <person name="Gardner M.J."/>
            <person name="Wortman J.R."/>
            <person name="Jordar V.S."/>
            <person name="Maiti R."/>
            <person name="Kodira C.D."/>
            <person name="Neafsey D.E."/>
            <person name="Zeng Q."/>
            <person name="Hung C.-Y."/>
            <person name="McMahan C."/>
            <person name="Muszewska A."/>
            <person name="Grynberg M."/>
            <person name="Mandel M.A."/>
            <person name="Kellner E.M."/>
            <person name="Barker B.M."/>
            <person name="Galgiani J.N."/>
            <person name="Orbach M.J."/>
            <person name="Kirkland T.N."/>
            <person name="Cole G.T."/>
            <person name="Henn M.R."/>
            <person name="Birren B.W."/>
            <person name="Taylor J.W."/>
        </authorList>
    </citation>
    <scope>NUCLEOTIDE SEQUENCE [LARGE SCALE GENOMIC DNA]</scope>
    <source>
        <strain>RS</strain>
    </source>
</reference>
<reference key="2">
    <citation type="journal article" date="2010" name="Genome Res.">
        <title>Population genomic sequencing of Coccidioides fungi reveals recent hybridization and transposon control.</title>
        <authorList>
            <person name="Neafsey D.E."/>
            <person name="Barker B.M."/>
            <person name="Sharpton T.J."/>
            <person name="Stajich J.E."/>
            <person name="Park D.J."/>
            <person name="Whiston E."/>
            <person name="Hung C.-Y."/>
            <person name="McMahan C."/>
            <person name="White J."/>
            <person name="Sykes S."/>
            <person name="Heiman D."/>
            <person name="Young S."/>
            <person name="Zeng Q."/>
            <person name="Abouelleil A."/>
            <person name="Aftuck L."/>
            <person name="Bessette D."/>
            <person name="Brown A."/>
            <person name="FitzGerald M."/>
            <person name="Lui A."/>
            <person name="Macdonald J.P."/>
            <person name="Priest M."/>
            <person name="Orbach M.J."/>
            <person name="Galgiani J.N."/>
            <person name="Kirkland T.N."/>
            <person name="Cole G.T."/>
            <person name="Birren B.W."/>
            <person name="Henn M.R."/>
            <person name="Taylor J.W."/>
            <person name="Rounsley S.D."/>
        </authorList>
    </citation>
    <scope>GENOME REANNOTATION</scope>
    <source>
        <strain>RS</strain>
    </source>
</reference>
<feature type="chain" id="PRO_0000304759" description="Mediator of RNA polymerase II transcription subunit 18">
    <location>
        <begin position="1"/>
        <end position="267"/>
    </location>
</feature>
<protein>
    <recommendedName>
        <fullName>Mediator of RNA polymerase II transcription subunit 18</fullName>
    </recommendedName>
    <alternativeName>
        <fullName>Mediator complex subunit 18</fullName>
    </alternativeName>
</protein>
<name>MED18_COCIM</name>
<dbReference type="EMBL" id="GG704916">
    <property type="protein sequence ID" value="EAS33024.2"/>
    <property type="molecule type" value="Genomic_DNA"/>
</dbReference>
<dbReference type="RefSeq" id="XP_001244607.2">
    <property type="nucleotide sequence ID" value="XM_001244606.2"/>
</dbReference>
<dbReference type="SMR" id="Q1E065"/>
<dbReference type="FunCoup" id="Q1E065">
    <property type="interactions" value="108"/>
</dbReference>
<dbReference type="STRING" id="246410.Q1E065"/>
<dbReference type="GeneID" id="4563149"/>
<dbReference type="KEGG" id="cim:CIMG_04048"/>
<dbReference type="VEuPathDB" id="FungiDB:CIMG_04048"/>
<dbReference type="InParanoid" id="Q1E065"/>
<dbReference type="OMA" id="PVHQHHE"/>
<dbReference type="OrthoDB" id="5348092at2759"/>
<dbReference type="Proteomes" id="UP000001261">
    <property type="component" value="Unassembled WGS sequence"/>
</dbReference>
<dbReference type="GO" id="GO:0070847">
    <property type="term" value="C:core mediator complex"/>
    <property type="evidence" value="ECO:0007669"/>
    <property type="project" value="TreeGrafter"/>
</dbReference>
<dbReference type="GO" id="GO:0016592">
    <property type="term" value="C:mediator complex"/>
    <property type="evidence" value="ECO:0007669"/>
    <property type="project" value="InterPro"/>
</dbReference>
<dbReference type="GO" id="GO:0003712">
    <property type="term" value="F:transcription coregulator activity"/>
    <property type="evidence" value="ECO:0007669"/>
    <property type="project" value="InterPro"/>
</dbReference>
<dbReference type="GO" id="GO:0006357">
    <property type="term" value="P:regulation of transcription by RNA polymerase II"/>
    <property type="evidence" value="ECO:0007669"/>
    <property type="project" value="InterPro"/>
</dbReference>
<dbReference type="GO" id="GO:0006369">
    <property type="term" value="P:termination of RNA polymerase II transcription"/>
    <property type="evidence" value="ECO:0007669"/>
    <property type="project" value="TreeGrafter"/>
</dbReference>
<dbReference type="Gene3D" id="2.40.320.10">
    <property type="entry name" value="Hypothetical Protein Pfu-838710-001"/>
    <property type="match status" value="1"/>
</dbReference>
<dbReference type="InterPro" id="IPR019095">
    <property type="entry name" value="Mediator_Med18"/>
</dbReference>
<dbReference type="PANTHER" id="PTHR13321:SF2">
    <property type="entry name" value="MEDIATOR OF RNA POLYMERASE II TRANSCRIPTION SUBUNIT 18"/>
    <property type="match status" value="1"/>
</dbReference>
<dbReference type="PANTHER" id="PTHR13321">
    <property type="entry name" value="MEDIATOR OF RNA POLYMERASE II TRANSCRIPTION, SUBUNIT 18"/>
    <property type="match status" value="1"/>
</dbReference>
<dbReference type="Pfam" id="PF09637">
    <property type="entry name" value="Med18"/>
    <property type="match status" value="1"/>
</dbReference>
<organism>
    <name type="scientific">Coccidioides immitis (strain RS)</name>
    <name type="common">Valley fever fungus</name>
    <dbReference type="NCBI Taxonomy" id="246410"/>
    <lineage>
        <taxon>Eukaryota</taxon>
        <taxon>Fungi</taxon>
        <taxon>Dikarya</taxon>
        <taxon>Ascomycota</taxon>
        <taxon>Pezizomycotina</taxon>
        <taxon>Eurotiomycetes</taxon>
        <taxon>Eurotiomycetidae</taxon>
        <taxon>Onygenales</taxon>
        <taxon>Onygenaceae</taxon>
        <taxon>Coccidioides</taxon>
    </lineage>
</organism>
<evidence type="ECO:0000250" key="1"/>
<evidence type="ECO:0000305" key="2"/>
<proteinExistence type="inferred from homology"/>
<keyword id="KW-0010">Activator</keyword>
<keyword id="KW-0539">Nucleus</keyword>
<keyword id="KW-1185">Reference proteome</keyword>
<keyword id="KW-0804">Transcription</keyword>
<keyword id="KW-0805">Transcription regulation</keyword>